<name>POTA_BACC1</name>
<feature type="chain" id="PRO_0000286192" description="Spermidine/putrescine import ATP-binding protein PotA">
    <location>
        <begin position="1"/>
        <end position="327"/>
    </location>
</feature>
<feature type="domain" description="ABC transporter" evidence="1">
    <location>
        <begin position="5"/>
        <end position="235"/>
    </location>
</feature>
<feature type="binding site" evidence="1">
    <location>
        <begin position="37"/>
        <end position="44"/>
    </location>
    <ligand>
        <name>ATP</name>
        <dbReference type="ChEBI" id="CHEBI:30616"/>
    </ligand>
</feature>
<dbReference type="EC" id="7.6.2.11" evidence="1"/>
<dbReference type="EMBL" id="AE017194">
    <property type="protein sequence ID" value="AAS40327.1"/>
    <property type="molecule type" value="Genomic_DNA"/>
</dbReference>
<dbReference type="SMR" id="Q73BM0"/>
<dbReference type="KEGG" id="bca:BCE_1398"/>
<dbReference type="HOGENOM" id="CLU_000604_1_1_9"/>
<dbReference type="Proteomes" id="UP000002527">
    <property type="component" value="Chromosome"/>
</dbReference>
<dbReference type="GO" id="GO:0043190">
    <property type="term" value="C:ATP-binding cassette (ABC) transporter complex"/>
    <property type="evidence" value="ECO:0007669"/>
    <property type="project" value="InterPro"/>
</dbReference>
<dbReference type="GO" id="GO:0015594">
    <property type="term" value="F:ABC-type putrescine transporter activity"/>
    <property type="evidence" value="ECO:0007669"/>
    <property type="project" value="InterPro"/>
</dbReference>
<dbReference type="GO" id="GO:0005524">
    <property type="term" value="F:ATP binding"/>
    <property type="evidence" value="ECO:0007669"/>
    <property type="project" value="UniProtKB-KW"/>
</dbReference>
<dbReference type="GO" id="GO:0016887">
    <property type="term" value="F:ATP hydrolysis activity"/>
    <property type="evidence" value="ECO:0007669"/>
    <property type="project" value="InterPro"/>
</dbReference>
<dbReference type="CDD" id="cd03300">
    <property type="entry name" value="ABC_PotA_N"/>
    <property type="match status" value="1"/>
</dbReference>
<dbReference type="FunFam" id="3.40.50.300:FF:000133">
    <property type="entry name" value="Spermidine/putrescine import ATP-binding protein PotA"/>
    <property type="match status" value="1"/>
</dbReference>
<dbReference type="Gene3D" id="3.40.50.300">
    <property type="entry name" value="P-loop containing nucleotide triphosphate hydrolases"/>
    <property type="match status" value="1"/>
</dbReference>
<dbReference type="InterPro" id="IPR003593">
    <property type="entry name" value="AAA+_ATPase"/>
</dbReference>
<dbReference type="InterPro" id="IPR050093">
    <property type="entry name" value="ABC_SmlMolc_Importer"/>
</dbReference>
<dbReference type="InterPro" id="IPR003439">
    <property type="entry name" value="ABC_transporter-like_ATP-bd"/>
</dbReference>
<dbReference type="InterPro" id="IPR017871">
    <property type="entry name" value="ABC_transporter-like_CS"/>
</dbReference>
<dbReference type="InterPro" id="IPR008995">
    <property type="entry name" value="Mo/tungstate-bd_C_term_dom"/>
</dbReference>
<dbReference type="InterPro" id="IPR027417">
    <property type="entry name" value="P-loop_NTPase"/>
</dbReference>
<dbReference type="InterPro" id="IPR017879">
    <property type="entry name" value="PotA_ATP-bd"/>
</dbReference>
<dbReference type="InterPro" id="IPR013611">
    <property type="entry name" value="Transp-assoc_OB_typ2"/>
</dbReference>
<dbReference type="PANTHER" id="PTHR42781">
    <property type="entry name" value="SPERMIDINE/PUTRESCINE IMPORT ATP-BINDING PROTEIN POTA"/>
    <property type="match status" value="1"/>
</dbReference>
<dbReference type="PANTHER" id="PTHR42781:SF4">
    <property type="entry name" value="SPERMIDINE_PUTRESCINE IMPORT ATP-BINDING PROTEIN POTA"/>
    <property type="match status" value="1"/>
</dbReference>
<dbReference type="Pfam" id="PF00005">
    <property type="entry name" value="ABC_tran"/>
    <property type="match status" value="1"/>
</dbReference>
<dbReference type="Pfam" id="PF08402">
    <property type="entry name" value="TOBE_2"/>
    <property type="match status" value="1"/>
</dbReference>
<dbReference type="SMART" id="SM00382">
    <property type="entry name" value="AAA"/>
    <property type="match status" value="1"/>
</dbReference>
<dbReference type="SUPFAM" id="SSF50331">
    <property type="entry name" value="MOP-like"/>
    <property type="match status" value="1"/>
</dbReference>
<dbReference type="SUPFAM" id="SSF52540">
    <property type="entry name" value="P-loop containing nucleoside triphosphate hydrolases"/>
    <property type="match status" value="1"/>
</dbReference>
<dbReference type="PROSITE" id="PS00211">
    <property type="entry name" value="ABC_TRANSPORTER_1"/>
    <property type="match status" value="1"/>
</dbReference>
<dbReference type="PROSITE" id="PS50893">
    <property type="entry name" value="ABC_TRANSPORTER_2"/>
    <property type="match status" value="1"/>
</dbReference>
<dbReference type="PROSITE" id="PS51305">
    <property type="entry name" value="POTA"/>
    <property type="match status" value="1"/>
</dbReference>
<proteinExistence type="inferred from homology"/>
<accession>Q73BM0</accession>
<evidence type="ECO:0000255" key="1">
    <source>
        <dbReference type="HAMAP-Rule" id="MF_01726"/>
    </source>
</evidence>
<organism>
    <name type="scientific">Bacillus cereus (strain ATCC 10987 / NRS 248)</name>
    <dbReference type="NCBI Taxonomy" id="222523"/>
    <lineage>
        <taxon>Bacteria</taxon>
        <taxon>Bacillati</taxon>
        <taxon>Bacillota</taxon>
        <taxon>Bacilli</taxon>
        <taxon>Bacillales</taxon>
        <taxon>Bacillaceae</taxon>
        <taxon>Bacillus</taxon>
        <taxon>Bacillus cereus group</taxon>
    </lineage>
</organism>
<keyword id="KW-0067">ATP-binding</keyword>
<keyword id="KW-1003">Cell membrane</keyword>
<keyword id="KW-0472">Membrane</keyword>
<keyword id="KW-0547">Nucleotide-binding</keyword>
<keyword id="KW-1278">Translocase</keyword>
<keyword id="KW-0813">Transport</keyword>
<protein>
    <recommendedName>
        <fullName evidence="1">Spermidine/putrescine import ATP-binding protein PotA</fullName>
        <ecNumber evidence="1">7.6.2.11</ecNumber>
    </recommendedName>
</protein>
<gene>
    <name evidence="1" type="primary">potA</name>
    <name type="ordered locus">BCE_1398</name>
</gene>
<comment type="function">
    <text evidence="1">Part of the ABC transporter complex PotABCD involved in spermidine/putrescine import. Responsible for energy coupling to the transport system.</text>
</comment>
<comment type="catalytic activity">
    <reaction evidence="1">
        <text>ATP + H2O + polyamine-[polyamine-binding protein]Side 1 = ADP + phosphate + polyamineSide 2 + [polyamine-binding protein]Side 1.</text>
        <dbReference type="EC" id="7.6.2.11"/>
    </reaction>
</comment>
<comment type="subunit">
    <text evidence="1">The complex is composed of two ATP-binding proteins (PotA), two transmembrane proteins (PotB and PotC) and a solute-binding protein (PotD).</text>
</comment>
<comment type="subcellular location">
    <subcellularLocation>
        <location evidence="1">Cell membrane</location>
        <topology evidence="1">Peripheral membrane protein</topology>
    </subcellularLocation>
</comment>
<comment type="similarity">
    <text evidence="1">Belongs to the ABC transporter superfamily. Spermidine/putrescine importer (TC 3.A.1.11.1) family.</text>
</comment>
<sequence length="327" mass="37400">MKKIIKVEAVEKHFGNQVIIPPLSLDIKEGEFLTILGPSGCGKTTLLRMIAGFETPTKGNLLLDDEKINDLPPYKRHMNLVFQHYALFPHMNVEKNICFGMKMQKVPAAEQKERAEEAMRLTQLLEFRNRKPAKLSGGQQQRVAIARAIVNNPRVLLLDEPLGALDFKLRKDLQRELKNLQRNLGITFIYVTHDQEEAMSMSDRIVVMNKGHIEQIGTPKEIYNKPKTLFVATFIGENNIVKNGEGYVAIRPENVKVRSVEEPILKEYHLGHIEDIEFVGNMEKLYVRDEKTSELLMAYQTAEEAAQWSIGDNVYVGWEQEDEVTLN</sequence>
<reference key="1">
    <citation type="journal article" date="2004" name="Nucleic Acids Res.">
        <title>The genome sequence of Bacillus cereus ATCC 10987 reveals metabolic adaptations and a large plasmid related to Bacillus anthracis pXO1.</title>
        <authorList>
            <person name="Rasko D.A."/>
            <person name="Ravel J."/>
            <person name="Oekstad O.A."/>
            <person name="Helgason E."/>
            <person name="Cer R.Z."/>
            <person name="Jiang L."/>
            <person name="Shores K.A."/>
            <person name="Fouts D.E."/>
            <person name="Tourasse N.J."/>
            <person name="Angiuoli S.V."/>
            <person name="Kolonay J.F."/>
            <person name="Nelson W.C."/>
            <person name="Kolstoe A.-B."/>
            <person name="Fraser C.M."/>
            <person name="Read T.D."/>
        </authorList>
    </citation>
    <scope>NUCLEOTIDE SEQUENCE [LARGE SCALE GENOMIC DNA]</scope>
    <source>
        <strain>ATCC 10987 / NRS 248</strain>
    </source>
</reference>